<accession>P80455</accession>
<accession>Q0E8F1</accession>
<accession>Q9VU40</accession>
<reference key="1">
    <citation type="submission" date="1995-07" db="EMBL/GenBank/DDBJ databases">
        <authorList>
            <person name="Greig S.R."/>
        </authorList>
    </citation>
    <scope>NUCLEOTIDE SEQUENCE [MRNA]</scope>
    <source>
        <tissue>Ovary</tissue>
    </source>
</reference>
<reference key="2">
    <citation type="journal article" date="2000" name="Science">
        <title>The genome sequence of Drosophila melanogaster.</title>
        <authorList>
            <person name="Adams M.D."/>
            <person name="Celniker S.E."/>
            <person name="Holt R.A."/>
            <person name="Evans C.A."/>
            <person name="Gocayne J.D."/>
            <person name="Amanatides P.G."/>
            <person name="Scherer S.E."/>
            <person name="Li P.W."/>
            <person name="Hoskins R.A."/>
            <person name="Galle R.F."/>
            <person name="George R.A."/>
            <person name="Lewis S.E."/>
            <person name="Richards S."/>
            <person name="Ashburner M."/>
            <person name="Henderson S.N."/>
            <person name="Sutton G.G."/>
            <person name="Wortman J.R."/>
            <person name="Yandell M.D."/>
            <person name="Zhang Q."/>
            <person name="Chen L.X."/>
            <person name="Brandon R.C."/>
            <person name="Rogers Y.-H.C."/>
            <person name="Blazej R.G."/>
            <person name="Champe M."/>
            <person name="Pfeiffer B.D."/>
            <person name="Wan K.H."/>
            <person name="Doyle C."/>
            <person name="Baxter E.G."/>
            <person name="Helt G."/>
            <person name="Nelson C.R."/>
            <person name="Miklos G.L.G."/>
            <person name="Abril J.F."/>
            <person name="Agbayani A."/>
            <person name="An H.-J."/>
            <person name="Andrews-Pfannkoch C."/>
            <person name="Baldwin D."/>
            <person name="Ballew R.M."/>
            <person name="Basu A."/>
            <person name="Baxendale J."/>
            <person name="Bayraktaroglu L."/>
            <person name="Beasley E.M."/>
            <person name="Beeson K.Y."/>
            <person name="Benos P.V."/>
            <person name="Berman B.P."/>
            <person name="Bhandari D."/>
            <person name="Bolshakov S."/>
            <person name="Borkova D."/>
            <person name="Botchan M.R."/>
            <person name="Bouck J."/>
            <person name="Brokstein P."/>
            <person name="Brottier P."/>
            <person name="Burtis K.C."/>
            <person name="Busam D.A."/>
            <person name="Butler H."/>
            <person name="Cadieu E."/>
            <person name="Center A."/>
            <person name="Chandra I."/>
            <person name="Cherry J.M."/>
            <person name="Cawley S."/>
            <person name="Dahlke C."/>
            <person name="Davenport L.B."/>
            <person name="Davies P."/>
            <person name="de Pablos B."/>
            <person name="Delcher A."/>
            <person name="Deng Z."/>
            <person name="Mays A.D."/>
            <person name="Dew I."/>
            <person name="Dietz S.M."/>
            <person name="Dodson K."/>
            <person name="Doup L.E."/>
            <person name="Downes M."/>
            <person name="Dugan-Rocha S."/>
            <person name="Dunkov B.C."/>
            <person name="Dunn P."/>
            <person name="Durbin K.J."/>
            <person name="Evangelista C.C."/>
            <person name="Ferraz C."/>
            <person name="Ferriera S."/>
            <person name="Fleischmann W."/>
            <person name="Fosler C."/>
            <person name="Gabrielian A.E."/>
            <person name="Garg N.S."/>
            <person name="Gelbart W.M."/>
            <person name="Glasser K."/>
            <person name="Glodek A."/>
            <person name="Gong F."/>
            <person name="Gorrell J.H."/>
            <person name="Gu Z."/>
            <person name="Guan P."/>
            <person name="Harris M."/>
            <person name="Harris N.L."/>
            <person name="Harvey D.A."/>
            <person name="Heiman T.J."/>
            <person name="Hernandez J.R."/>
            <person name="Houck J."/>
            <person name="Hostin D."/>
            <person name="Houston K.A."/>
            <person name="Howland T.J."/>
            <person name="Wei M.-H."/>
            <person name="Ibegwam C."/>
            <person name="Jalali M."/>
            <person name="Kalush F."/>
            <person name="Karpen G.H."/>
            <person name="Ke Z."/>
            <person name="Kennison J.A."/>
            <person name="Ketchum K.A."/>
            <person name="Kimmel B.E."/>
            <person name="Kodira C.D."/>
            <person name="Kraft C.L."/>
            <person name="Kravitz S."/>
            <person name="Kulp D."/>
            <person name="Lai Z."/>
            <person name="Lasko P."/>
            <person name="Lei Y."/>
            <person name="Levitsky A.A."/>
            <person name="Li J.H."/>
            <person name="Li Z."/>
            <person name="Liang Y."/>
            <person name="Lin X."/>
            <person name="Liu X."/>
            <person name="Mattei B."/>
            <person name="McIntosh T.C."/>
            <person name="McLeod M.P."/>
            <person name="McPherson D."/>
            <person name="Merkulov G."/>
            <person name="Milshina N.V."/>
            <person name="Mobarry C."/>
            <person name="Morris J."/>
            <person name="Moshrefi A."/>
            <person name="Mount S.M."/>
            <person name="Moy M."/>
            <person name="Murphy B."/>
            <person name="Murphy L."/>
            <person name="Muzny D.M."/>
            <person name="Nelson D.L."/>
            <person name="Nelson D.R."/>
            <person name="Nelson K.A."/>
            <person name="Nixon K."/>
            <person name="Nusskern D.R."/>
            <person name="Pacleb J.M."/>
            <person name="Palazzolo M."/>
            <person name="Pittman G.S."/>
            <person name="Pan S."/>
            <person name="Pollard J."/>
            <person name="Puri V."/>
            <person name="Reese M.G."/>
            <person name="Reinert K."/>
            <person name="Remington K."/>
            <person name="Saunders R.D.C."/>
            <person name="Scheeler F."/>
            <person name="Shen H."/>
            <person name="Shue B.C."/>
            <person name="Siden-Kiamos I."/>
            <person name="Simpson M."/>
            <person name="Skupski M.P."/>
            <person name="Smith T.J."/>
            <person name="Spier E."/>
            <person name="Spradling A.C."/>
            <person name="Stapleton M."/>
            <person name="Strong R."/>
            <person name="Sun E."/>
            <person name="Svirskas R."/>
            <person name="Tector C."/>
            <person name="Turner R."/>
            <person name="Venter E."/>
            <person name="Wang A.H."/>
            <person name="Wang X."/>
            <person name="Wang Z.-Y."/>
            <person name="Wassarman D.A."/>
            <person name="Weinstock G.M."/>
            <person name="Weissenbach J."/>
            <person name="Williams S.M."/>
            <person name="Woodage T."/>
            <person name="Worley K.C."/>
            <person name="Wu D."/>
            <person name="Yang S."/>
            <person name="Yao Q.A."/>
            <person name="Ye J."/>
            <person name="Yeh R.-F."/>
            <person name="Zaveri J.S."/>
            <person name="Zhan M."/>
            <person name="Zhang G."/>
            <person name="Zhao Q."/>
            <person name="Zheng L."/>
            <person name="Zheng X.H."/>
            <person name="Zhong F.N."/>
            <person name="Zhong W."/>
            <person name="Zhou X."/>
            <person name="Zhu S.C."/>
            <person name="Zhu X."/>
            <person name="Smith H.O."/>
            <person name="Gibbs R.A."/>
            <person name="Myers E.W."/>
            <person name="Rubin G.M."/>
            <person name="Venter J.C."/>
        </authorList>
    </citation>
    <scope>NUCLEOTIDE SEQUENCE [LARGE SCALE GENOMIC DNA]</scope>
    <source>
        <strain>Berkeley</strain>
    </source>
</reference>
<reference key="3">
    <citation type="journal article" date="2002" name="Genome Biol.">
        <title>Annotation of the Drosophila melanogaster euchromatic genome: a systematic review.</title>
        <authorList>
            <person name="Misra S."/>
            <person name="Crosby M.A."/>
            <person name="Mungall C.J."/>
            <person name="Matthews B.B."/>
            <person name="Campbell K.S."/>
            <person name="Hradecky P."/>
            <person name="Huang Y."/>
            <person name="Kaminker J.S."/>
            <person name="Millburn G.H."/>
            <person name="Prochnik S.E."/>
            <person name="Smith C.D."/>
            <person name="Tupy J.L."/>
            <person name="Whitfield E.J."/>
            <person name="Bayraktaroglu L."/>
            <person name="Berman B.P."/>
            <person name="Bettencourt B.R."/>
            <person name="Celniker S.E."/>
            <person name="de Grey A.D.N.J."/>
            <person name="Drysdale R.A."/>
            <person name="Harris N.L."/>
            <person name="Richter J."/>
            <person name="Russo S."/>
            <person name="Schroeder A.J."/>
            <person name="Shu S.Q."/>
            <person name="Stapleton M."/>
            <person name="Yamada C."/>
            <person name="Ashburner M."/>
            <person name="Gelbart W.M."/>
            <person name="Rubin G.M."/>
            <person name="Lewis S.E."/>
        </authorList>
    </citation>
    <scope>GENOME REANNOTATION</scope>
    <source>
        <strain>Berkeley</strain>
    </source>
</reference>
<reference key="4">
    <citation type="journal article" date="2002" name="Genome Biol.">
        <title>A Drosophila full-length cDNA resource.</title>
        <authorList>
            <person name="Stapleton M."/>
            <person name="Carlson J.W."/>
            <person name="Brokstein P."/>
            <person name="Yu C."/>
            <person name="Champe M."/>
            <person name="George R.A."/>
            <person name="Guarin H."/>
            <person name="Kronmiller B."/>
            <person name="Pacleb J.M."/>
            <person name="Park S."/>
            <person name="Wan K.H."/>
            <person name="Rubin G.M."/>
            <person name="Celniker S.E."/>
        </authorList>
    </citation>
    <scope>NUCLEOTIDE SEQUENCE [LARGE SCALE MRNA]</scope>
    <source>
        <strain>Berkeley</strain>
        <tissue>Embryo</tissue>
    </source>
</reference>
<reference key="5">
    <citation type="journal article" date="2019" name="PLoS Genet.">
        <title>Drosophila RpS12 controls translation, growth, and cell competition through Xrp1.</title>
        <authorList>
            <person name="Ji Z."/>
            <person name="Kiparaki M."/>
            <person name="Folgado V."/>
            <person name="Kumar A."/>
            <person name="Blanco J."/>
            <person name="Rimesso G."/>
            <person name="Chuen J."/>
            <person name="Liu Y."/>
            <person name="Zheng D."/>
            <person name="Baker N.E."/>
        </authorList>
    </citation>
    <scope>FUNCTION</scope>
    <scope>MUTAGENESIS OF GLY-97</scope>
</reference>
<reference key="6">
    <citation type="journal article" date="2013" name="Nature">
        <title>Structures of the human and Drosophila 80S ribosome.</title>
        <authorList>
            <person name="Anger A.M."/>
            <person name="Armache J.P."/>
            <person name="Berninghausen O."/>
            <person name="Habeck M."/>
            <person name="Subklewe M."/>
            <person name="Wilson D.N."/>
            <person name="Beckmann R."/>
        </authorList>
    </citation>
    <scope>STRUCTURE BY ELECTRON MICROSCOPY (6.0 ANGSTROMS) OF THE 80S RIBOSOME</scope>
    <scope>FUNCTION</scope>
</reference>
<feature type="chain" id="PRO_0000122330" description="Small ribosomal subunit protein eS12">
    <location>
        <begin position="1"/>
        <end position="139"/>
    </location>
</feature>
<feature type="mutagenesis site" description="Moderately delays development and reduces lifespan. In wing imaginal disks, increases its transcript level." evidence="2">
    <original>G</original>
    <variation>D</variation>
    <location>
        <position position="97"/>
    </location>
</feature>
<name>RS12_DROME</name>
<dbReference type="EMBL" id="X89659">
    <property type="protein sequence ID" value="CAA61806.1"/>
    <property type="status" value="ALT_INIT"/>
    <property type="molecule type" value="mRNA"/>
</dbReference>
<dbReference type="EMBL" id="AE014296">
    <property type="protein sequence ID" value="AAN11845.1"/>
    <property type="molecule type" value="Genomic_DNA"/>
</dbReference>
<dbReference type="EMBL" id="AY058531">
    <property type="protein sequence ID" value="AAL13760.1"/>
    <property type="molecule type" value="mRNA"/>
</dbReference>
<dbReference type="PIR" id="S58022">
    <property type="entry name" value="S58022"/>
</dbReference>
<dbReference type="RefSeq" id="NP_729866.1">
    <property type="nucleotide sequence ID" value="NM_168534.4"/>
</dbReference>
<dbReference type="PDB" id="4V6W">
    <property type="method" value="EM"/>
    <property type="resolution" value="6.00 A"/>
    <property type="chains" value="AM=1-139"/>
</dbReference>
<dbReference type="PDB" id="6XU6">
    <property type="method" value="EM"/>
    <property type="resolution" value="3.50 A"/>
    <property type="chains" value="AM=21-139"/>
</dbReference>
<dbReference type="PDB" id="6XU7">
    <property type="method" value="EM"/>
    <property type="resolution" value="4.90 A"/>
    <property type="chains" value="AM=21-139"/>
</dbReference>
<dbReference type="PDB" id="6XU8">
    <property type="method" value="EM"/>
    <property type="resolution" value="3.00 A"/>
    <property type="chains" value="AM=21-139"/>
</dbReference>
<dbReference type="PDBsum" id="4V6W"/>
<dbReference type="PDBsum" id="6XU6"/>
<dbReference type="PDBsum" id="6XU7"/>
<dbReference type="PDBsum" id="6XU8"/>
<dbReference type="EMDB" id="EMD-10622"/>
<dbReference type="EMDB" id="EMD-10623"/>
<dbReference type="EMDB" id="EMD-10624"/>
<dbReference type="SMR" id="P80455"/>
<dbReference type="BioGRID" id="64826">
    <property type="interactions" value="112"/>
</dbReference>
<dbReference type="FunCoup" id="P80455">
    <property type="interactions" value="1396"/>
</dbReference>
<dbReference type="IntAct" id="P80455">
    <property type="interactions" value="6"/>
</dbReference>
<dbReference type="STRING" id="7227.FBpp0075612"/>
<dbReference type="PaxDb" id="7227-FBpp0075612"/>
<dbReference type="DNASU" id="39480"/>
<dbReference type="EnsemblMetazoa" id="FBtr0075878">
    <property type="protein sequence ID" value="FBpp0075612"/>
    <property type="gene ID" value="FBgn0286213"/>
</dbReference>
<dbReference type="GeneID" id="39480"/>
<dbReference type="KEGG" id="dme:Dmel_CG11271"/>
<dbReference type="AGR" id="FB:FBgn0286213"/>
<dbReference type="CTD" id="6206"/>
<dbReference type="FlyBase" id="FBgn0286213">
    <property type="gene designation" value="RpS12"/>
</dbReference>
<dbReference type="VEuPathDB" id="VectorBase:FBgn0286213"/>
<dbReference type="eggNOG" id="KOG3406">
    <property type="taxonomic scope" value="Eukaryota"/>
</dbReference>
<dbReference type="GeneTree" id="ENSGT00390000018318"/>
<dbReference type="HOGENOM" id="CLU_110343_1_0_1"/>
<dbReference type="InParanoid" id="P80455"/>
<dbReference type="OMA" id="CAEHQIP"/>
<dbReference type="OrthoDB" id="10249311at2759"/>
<dbReference type="PhylomeDB" id="P80455"/>
<dbReference type="Reactome" id="R-DME-156827">
    <property type="pathway name" value="L13a-mediated translational silencing of Ceruloplasmin expression"/>
</dbReference>
<dbReference type="Reactome" id="R-DME-1799339">
    <property type="pathway name" value="SRP-dependent cotranslational protein targeting to membrane"/>
</dbReference>
<dbReference type="Reactome" id="R-DME-72649">
    <property type="pathway name" value="Translation initiation complex formation"/>
</dbReference>
<dbReference type="Reactome" id="R-DME-72689">
    <property type="pathway name" value="Formation of a pool of free 40S subunits"/>
</dbReference>
<dbReference type="Reactome" id="R-DME-72695">
    <property type="pathway name" value="Formation of the ternary complex, and subsequently, the 43S complex"/>
</dbReference>
<dbReference type="Reactome" id="R-DME-72702">
    <property type="pathway name" value="Ribosomal scanning and start codon recognition"/>
</dbReference>
<dbReference type="Reactome" id="R-DME-72706">
    <property type="pathway name" value="GTP hydrolysis and joining of the 60S ribosomal subunit"/>
</dbReference>
<dbReference type="Reactome" id="R-DME-975956">
    <property type="pathway name" value="Nonsense Mediated Decay (NMD) independent of the Exon Junction Complex (EJC)"/>
</dbReference>
<dbReference type="Reactome" id="R-DME-975957">
    <property type="pathway name" value="Nonsense Mediated Decay (NMD) enhanced by the Exon Junction Complex (EJC)"/>
</dbReference>
<dbReference type="BioGRID-ORCS" id="39480">
    <property type="hits" value="1 hit in 1 CRISPR screen"/>
</dbReference>
<dbReference type="ChiTaRS" id="RpS12">
    <property type="organism name" value="fly"/>
</dbReference>
<dbReference type="GenomeRNAi" id="39480"/>
<dbReference type="PRO" id="PR:P80455"/>
<dbReference type="Proteomes" id="UP000000803">
    <property type="component" value="Chromosome 3L"/>
</dbReference>
<dbReference type="Bgee" id="FBgn0286213">
    <property type="expression patterns" value="Expressed in adult enteroendocrine precursor cell in adult midgut (Drosophila) and 297 other cell types or tissues"/>
</dbReference>
<dbReference type="GO" id="GO:0022626">
    <property type="term" value="C:cytosolic ribosome"/>
    <property type="evidence" value="ECO:0000314"/>
    <property type="project" value="FlyBase"/>
</dbReference>
<dbReference type="GO" id="GO:0022627">
    <property type="term" value="C:cytosolic small ribosomal subunit"/>
    <property type="evidence" value="ECO:0000318"/>
    <property type="project" value="GO_Central"/>
</dbReference>
<dbReference type="GO" id="GO:0005730">
    <property type="term" value="C:nucleolus"/>
    <property type="evidence" value="ECO:0007669"/>
    <property type="project" value="UniProtKB-SubCell"/>
</dbReference>
<dbReference type="GO" id="GO:0015935">
    <property type="term" value="C:small ribosomal subunit"/>
    <property type="evidence" value="ECO:0000314"/>
    <property type="project" value="FlyBase"/>
</dbReference>
<dbReference type="GO" id="GO:0032040">
    <property type="term" value="C:small-subunit processome"/>
    <property type="evidence" value="ECO:0000250"/>
    <property type="project" value="UniProtKB"/>
</dbReference>
<dbReference type="GO" id="GO:0003735">
    <property type="term" value="F:structural constituent of ribosome"/>
    <property type="evidence" value="ECO:0000314"/>
    <property type="project" value="FlyBase"/>
</dbReference>
<dbReference type="GO" id="GO:0002181">
    <property type="term" value="P:cytoplasmic translation"/>
    <property type="evidence" value="ECO:0000304"/>
    <property type="project" value="FlyBase"/>
</dbReference>
<dbReference type="GO" id="GO:1990145">
    <property type="term" value="P:maintenance of translational fidelity"/>
    <property type="evidence" value="ECO:0000318"/>
    <property type="project" value="GO_Central"/>
</dbReference>
<dbReference type="GO" id="GO:0090263">
    <property type="term" value="P:positive regulation of canonical Wnt signaling pathway"/>
    <property type="evidence" value="ECO:0000315"/>
    <property type="project" value="FlyBase"/>
</dbReference>
<dbReference type="GO" id="GO:0042274">
    <property type="term" value="P:ribosomal small subunit biogenesis"/>
    <property type="evidence" value="ECO:0000250"/>
    <property type="project" value="UniProtKB"/>
</dbReference>
<dbReference type="FunFam" id="3.30.1330.30:FF:000005">
    <property type="entry name" value="40S ribosomal protein S12"/>
    <property type="match status" value="1"/>
</dbReference>
<dbReference type="Gene3D" id="3.30.1330.30">
    <property type="match status" value="1"/>
</dbReference>
<dbReference type="InterPro" id="IPR029064">
    <property type="entry name" value="Ribosomal_eL30-like_sf"/>
</dbReference>
<dbReference type="InterPro" id="IPR004038">
    <property type="entry name" value="Ribosomal_eL8/eL30/eS12/Gad45"/>
</dbReference>
<dbReference type="InterPro" id="IPR000530">
    <property type="entry name" value="Ribosomal_eS12"/>
</dbReference>
<dbReference type="InterPro" id="IPR047860">
    <property type="entry name" value="Ribosomal_eS12_CS"/>
</dbReference>
<dbReference type="PANTHER" id="PTHR11843">
    <property type="entry name" value="40S RIBOSOMAL PROTEIN S12"/>
    <property type="match status" value="1"/>
</dbReference>
<dbReference type="Pfam" id="PF01248">
    <property type="entry name" value="Ribosomal_L7Ae"/>
    <property type="match status" value="1"/>
</dbReference>
<dbReference type="PRINTS" id="PR00972">
    <property type="entry name" value="RIBSOMALS12E"/>
</dbReference>
<dbReference type="SUPFAM" id="SSF55315">
    <property type="entry name" value="L30e-like"/>
    <property type="match status" value="1"/>
</dbReference>
<dbReference type="PROSITE" id="PS01189">
    <property type="entry name" value="RIBOSOMAL_S12E"/>
    <property type="match status" value="1"/>
</dbReference>
<sequence>MADVDVDVPSAAPVLDGAMDINTALQEVLKKSLIADGLVHGIHQACKALDKRQAVLCILAESFDEPNYKKLVTALCNEHQIPLIRVDSHKKLGEWSGLCKIDKEGKPRKVCGCSVVVIKDFGEETPALDVVKDHLRQNS</sequence>
<evidence type="ECO:0000250" key="1">
    <source>
        <dbReference type="UniProtKB" id="P25398"/>
    </source>
</evidence>
<evidence type="ECO:0000269" key="2">
    <source>
    </source>
</evidence>
<evidence type="ECO:0000269" key="3">
    <source>
    </source>
</evidence>
<evidence type="ECO:0000305" key="4"/>
<evidence type="ECO:0000312" key="5">
    <source>
        <dbReference type="FlyBase" id="FBgn0286213"/>
    </source>
</evidence>
<protein>
    <recommendedName>
        <fullName evidence="4">Small ribosomal subunit protein eS12</fullName>
    </recommendedName>
    <alternativeName>
        <fullName>40S ribosomal protein S12</fullName>
    </alternativeName>
</protein>
<comment type="function">
    <text evidence="1 2 3">Subunit of the 40S ribosomal complex (PubMed:23636399). Part of the small subunit (SSU) processome, first precursor of the small eukaryotic ribosomal subunit. During the assembly of the SSU processome in the nucleolus, many ribosome biogenesis factors, an RNA chaperone and ribosomal proteins associate with the nascent pre-rRNA and work in concert to generate RNA folding, modifications, rearrangements and cleavage as well as targeted degradation of pre-ribosomal RNA by the RNA exosome (By similarity). In wing imaginal disks, might have a role in translation rate, growth and cell competition, probably through regulation of Xrp1 expression (PubMed:31841522). Might have a role in development and longevity (PubMed:31841522).</text>
</comment>
<comment type="subunit">
    <text evidence="1 2">Subunit of the 40S ribosomal complex (PubMed:23636399). Part of the small subunit (SSU) processome, composed of more than 70 proteins and the RNA chaperone small nucleolar RNA (snoRNA) U3 (By similarity).</text>
</comment>
<comment type="subcellular location">
    <subcellularLocation>
        <location evidence="1">Nucleus</location>
        <location evidence="1">Nucleolus</location>
    </subcellularLocation>
</comment>
<comment type="similarity">
    <text evidence="4">Belongs to the eukaryotic ribosomal protein eS12 family.</text>
</comment>
<comment type="sequence caution" evidence="4">
    <conflict type="erroneous initiation">
        <sequence resource="EMBL-CDS" id="CAA61806"/>
    </conflict>
    <text>Extended N-terminus.</text>
</comment>
<keyword id="KW-0002">3D-structure</keyword>
<keyword id="KW-0539">Nucleus</keyword>
<keyword id="KW-1185">Reference proteome</keyword>
<keyword id="KW-0687">Ribonucleoprotein</keyword>
<keyword id="KW-0689">Ribosomal protein</keyword>
<organism>
    <name type="scientific">Drosophila melanogaster</name>
    <name type="common">Fruit fly</name>
    <dbReference type="NCBI Taxonomy" id="7227"/>
    <lineage>
        <taxon>Eukaryota</taxon>
        <taxon>Metazoa</taxon>
        <taxon>Ecdysozoa</taxon>
        <taxon>Arthropoda</taxon>
        <taxon>Hexapoda</taxon>
        <taxon>Insecta</taxon>
        <taxon>Pterygota</taxon>
        <taxon>Neoptera</taxon>
        <taxon>Endopterygota</taxon>
        <taxon>Diptera</taxon>
        <taxon>Brachycera</taxon>
        <taxon>Muscomorpha</taxon>
        <taxon>Ephydroidea</taxon>
        <taxon>Drosophilidae</taxon>
        <taxon>Drosophila</taxon>
        <taxon>Sophophora</taxon>
    </lineage>
</organism>
<gene>
    <name evidence="5" type="primary">RpS12</name>
    <name type="synonym">RpS12E</name>
    <name evidence="5" type="ORF">CG11271</name>
</gene>
<proteinExistence type="evidence at protein level"/>